<accession>Q2H6N9</accession>
<name>CAF17_CHAGB</name>
<evidence type="ECO:0000250" key="1">
    <source>
        <dbReference type="UniProtKB" id="P47158"/>
    </source>
</evidence>
<evidence type="ECO:0000255" key="2"/>
<evidence type="ECO:0000256" key="3">
    <source>
        <dbReference type="SAM" id="MobiDB-lite"/>
    </source>
</evidence>
<evidence type="ECO:0000305" key="4"/>
<protein>
    <recommendedName>
        <fullName>Iron-sulfur cluster assembly factor IBA57 homolog, mitochondrial</fullName>
    </recommendedName>
</protein>
<sequence>MQPARRVVTSTVRLRARGGVSGVFTCRGCLTRPRLPLPASAPQQRRGLSGSAPRNAAPPGLYPAGIAELSSRKLISVSGPDAAKYLQGVITANLTPGYAGPNPTSEHLRSDAGFYAAFLTAQGRILHDVFIYRDVRDTTHPAGHSWLVEVDAAEADRLQKHIKRYKLRAKFDVRLLNEGEGRVWHAWDDANPSSLTTTQPSFPSSSPTIITTPDHRAPNLGHRLLTFSTPTPSLPLPTLPETAYRLRRYRHGIAEGQAELLYNTALPHESNLDATGAVDFRKGCYVGQELTIRTEHRGVVRKRVLPCVLYPDGQAEGGGVVVVPGEVGFRSDVGAEGVTAEMVPAEASIGRVGKKGRSAGKWLSGVGNLGLALCRLEIMTDVVLPGETGGTGFVEGDEFVVGLGGGSGEEGGEGKKVRIKAFVPDWLRTALASKEGH</sequence>
<dbReference type="EMBL" id="CH408031">
    <property type="protein sequence ID" value="EAQ89057.1"/>
    <property type="molecule type" value="Genomic_DNA"/>
</dbReference>
<dbReference type="RefSeq" id="XP_001221771.1">
    <property type="nucleotide sequence ID" value="XM_001221770.1"/>
</dbReference>
<dbReference type="SMR" id="Q2H6N9"/>
<dbReference type="FunCoup" id="Q2H6N9">
    <property type="interactions" value="239"/>
</dbReference>
<dbReference type="STRING" id="306901.Q2H6N9"/>
<dbReference type="GeneID" id="4390748"/>
<dbReference type="VEuPathDB" id="FungiDB:CHGG_05676"/>
<dbReference type="eggNOG" id="KOG2929">
    <property type="taxonomic scope" value="Eukaryota"/>
</dbReference>
<dbReference type="HOGENOM" id="CLU_007884_7_0_1"/>
<dbReference type="InParanoid" id="Q2H6N9"/>
<dbReference type="OMA" id="NMLVAND"/>
<dbReference type="OrthoDB" id="191995at2759"/>
<dbReference type="Proteomes" id="UP000001056">
    <property type="component" value="Unassembled WGS sequence"/>
</dbReference>
<dbReference type="GO" id="GO:0005759">
    <property type="term" value="C:mitochondrial matrix"/>
    <property type="evidence" value="ECO:0007669"/>
    <property type="project" value="TreeGrafter"/>
</dbReference>
<dbReference type="GO" id="GO:0016740">
    <property type="term" value="F:transferase activity"/>
    <property type="evidence" value="ECO:0007669"/>
    <property type="project" value="UniProtKB-KW"/>
</dbReference>
<dbReference type="GO" id="GO:0016226">
    <property type="term" value="P:iron-sulfur cluster assembly"/>
    <property type="evidence" value="ECO:0007669"/>
    <property type="project" value="TreeGrafter"/>
</dbReference>
<dbReference type="Gene3D" id="3.30.1360.120">
    <property type="entry name" value="Probable tRNA modification gtpase trme, domain 1"/>
    <property type="match status" value="2"/>
</dbReference>
<dbReference type="InterPro" id="IPR027266">
    <property type="entry name" value="TrmE/GcvT_dom1"/>
</dbReference>
<dbReference type="InterPro" id="IPR045179">
    <property type="entry name" value="YgfZ/GcvT"/>
</dbReference>
<dbReference type="InterPro" id="IPR017703">
    <property type="entry name" value="YgfZ/GcvT_CS"/>
</dbReference>
<dbReference type="NCBIfam" id="TIGR03317">
    <property type="entry name" value="ygfZ_signature"/>
    <property type="match status" value="1"/>
</dbReference>
<dbReference type="PANTHER" id="PTHR22602">
    <property type="entry name" value="TRANSFERASE CAF17, MITOCHONDRIAL-RELATED"/>
    <property type="match status" value="1"/>
</dbReference>
<dbReference type="PANTHER" id="PTHR22602:SF0">
    <property type="entry name" value="TRANSFERASE CAF17, MITOCHONDRIAL-RELATED"/>
    <property type="match status" value="1"/>
</dbReference>
<dbReference type="Pfam" id="PF25455">
    <property type="entry name" value="Beta-barrel_CAF17_C"/>
    <property type="match status" value="1"/>
</dbReference>
<dbReference type="SUPFAM" id="SSF103025">
    <property type="entry name" value="Folate-binding domain"/>
    <property type="match status" value="1"/>
</dbReference>
<proteinExistence type="inferred from homology"/>
<feature type="transit peptide" description="Mitochondrion" evidence="2">
    <location>
        <begin position="1"/>
        <end position="14"/>
    </location>
</feature>
<feature type="chain" id="PRO_0000301696" description="Iron-sulfur cluster assembly factor IBA57 homolog, mitochondrial">
    <location>
        <begin position="15"/>
        <end position="437"/>
    </location>
</feature>
<feature type="region of interest" description="Disordered" evidence="3">
    <location>
        <begin position="35"/>
        <end position="56"/>
    </location>
</feature>
<reference key="1">
    <citation type="journal article" date="2015" name="Genome Announc.">
        <title>Draft genome sequence of the cellulolytic fungus Chaetomium globosum.</title>
        <authorList>
            <person name="Cuomo C.A."/>
            <person name="Untereiner W.A."/>
            <person name="Ma L.-J."/>
            <person name="Grabherr M."/>
            <person name="Birren B.W."/>
        </authorList>
    </citation>
    <scope>NUCLEOTIDE SEQUENCE [LARGE SCALE GENOMIC DNA]</scope>
    <source>
        <strain>ATCC 6205 / CBS 148.51 / DSM 1962 / NBRC 6347 / NRRL 1970</strain>
    </source>
</reference>
<organism>
    <name type="scientific">Chaetomium globosum (strain ATCC 6205 / CBS 148.51 / DSM 1962 / NBRC 6347 / NRRL 1970)</name>
    <name type="common">Soil fungus</name>
    <dbReference type="NCBI Taxonomy" id="306901"/>
    <lineage>
        <taxon>Eukaryota</taxon>
        <taxon>Fungi</taxon>
        <taxon>Dikarya</taxon>
        <taxon>Ascomycota</taxon>
        <taxon>Pezizomycotina</taxon>
        <taxon>Sordariomycetes</taxon>
        <taxon>Sordariomycetidae</taxon>
        <taxon>Sordariales</taxon>
        <taxon>Chaetomiaceae</taxon>
        <taxon>Chaetomium</taxon>
    </lineage>
</organism>
<keyword id="KW-0496">Mitochondrion</keyword>
<keyword id="KW-1185">Reference proteome</keyword>
<keyword id="KW-0809">Transit peptide</keyword>
<comment type="subcellular location">
    <subcellularLocation>
        <location evidence="1">Mitochondrion matrix</location>
    </subcellularLocation>
</comment>
<comment type="similarity">
    <text evidence="4">Belongs to the GcvT family. CAF17/IBA57 subfamily.</text>
</comment>
<gene>
    <name type="primary">CAF17</name>
    <name type="ORF">CHGG_05676</name>
</gene>